<organism>
    <name type="scientific">Streptomyces griseus subsp. griseus (strain JCM 4626 / CBS 651.72 / NBRC 13350 / KCC S-0626 / ISP 5235)</name>
    <dbReference type="NCBI Taxonomy" id="455632"/>
    <lineage>
        <taxon>Bacteria</taxon>
        <taxon>Bacillati</taxon>
        <taxon>Actinomycetota</taxon>
        <taxon>Actinomycetes</taxon>
        <taxon>Kitasatosporales</taxon>
        <taxon>Streptomycetaceae</taxon>
        <taxon>Streptomyces</taxon>
    </lineage>
</organism>
<reference key="1">
    <citation type="journal article" date="2008" name="J. Bacteriol.">
        <title>Genome sequence of the streptomycin-producing microorganism Streptomyces griseus IFO 13350.</title>
        <authorList>
            <person name="Ohnishi Y."/>
            <person name="Ishikawa J."/>
            <person name="Hara H."/>
            <person name="Suzuki H."/>
            <person name="Ikenoya M."/>
            <person name="Ikeda H."/>
            <person name="Yamashita A."/>
            <person name="Hattori M."/>
            <person name="Horinouchi S."/>
        </authorList>
    </citation>
    <scope>NUCLEOTIDE SEQUENCE [LARGE SCALE GENOMIC DNA]</scope>
    <source>
        <strain>JCM 4626 / CBS 651.72 / NBRC 13350 / KCC S-0626 / ISP 5235</strain>
    </source>
</reference>
<name>LANSB_STRGG</name>
<accession>B1W1K0</accession>
<sequence>MALLDLQAMDTPAEDSFGELATGSQVSLLVCEYSSLSVVLCTP</sequence>
<evidence type="ECO:0000250" key="1"/>
<evidence type="ECO:0000305" key="2"/>
<proteinExistence type="inferred from homology"/>
<gene>
    <name type="primary">ramS</name>
    <name type="synonym">amfS</name>
    <name type="ordered locus">SGR_2396</name>
</gene>
<comment type="function">
    <text evidence="1">Lanthionine-containing peptide devoid of antibiotic properties, involved in the formation of aerial mycelium. Suggested to self-assemble at air-water interfaces, thus providing a film of surfactant through which nascent aerial hyphae can emerge. The aerial hyphae differentiate further into spores (By similarity).</text>
</comment>
<comment type="PTM">
    <text>Maturation involves the enzymatic conversion of Ser into dehydrated AA and the formation of thioether bonds with cysteine. This is followed by membrane translocation and cleavage of the modified precursor.</text>
</comment>
<comment type="similarity">
    <text evidence="2">Belongs to the lanthionine-containing morphogen protein family.</text>
</comment>
<feature type="signal peptide" evidence="1">
    <location>
        <begin position="1"/>
        <end position="21"/>
    </location>
</feature>
<feature type="peptide" id="PRO_0000342633" description="Lanthionine-containing peptide SapB">
    <location>
        <begin position="22"/>
        <end position="43"/>
    </location>
</feature>
<feature type="modified residue" description="2,3-didehydroalanine (Ser)" evidence="1">
    <location>
        <position position="27"/>
    </location>
</feature>
<feature type="modified residue" description="2,3-didehydroalanine (Ser)" evidence="1">
    <location>
        <position position="37"/>
    </location>
</feature>
<feature type="cross-link" description="Lanthionine (Ser-Cys)" evidence="1">
    <location>
        <begin position="24"/>
        <end position="31"/>
    </location>
</feature>
<feature type="cross-link" description="Lanthionine (Ser-Cys)" evidence="1">
    <location>
        <begin position="34"/>
        <end position="41"/>
    </location>
</feature>
<dbReference type="EMBL" id="AP009493">
    <property type="protein sequence ID" value="BAG19225.1"/>
    <property type="molecule type" value="Genomic_DNA"/>
</dbReference>
<dbReference type="RefSeq" id="WP_003966507.1">
    <property type="nucleotide sequence ID" value="NC_010572.1"/>
</dbReference>
<dbReference type="KEGG" id="sgr:SGR_2396"/>
<dbReference type="eggNOG" id="ENOG5031WU5">
    <property type="taxonomic scope" value="Bacteria"/>
</dbReference>
<dbReference type="HOGENOM" id="CLU_212233_0_0_11"/>
<dbReference type="Proteomes" id="UP000001685">
    <property type="component" value="Chromosome"/>
</dbReference>
<dbReference type="InterPro" id="IPR045825">
    <property type="entry name" value="RamS"/>
</dbReference>
<dbReference type="NCBIfam" id="NF038159">
    <property type="entry name" value="lanthi_III_b"/>
    <property type="match status" value="1"/>
</dbReference>
<dbReference type="NCBIfam" id="NF033212">
    <property type="entry name" value="SapB_AmfS_lanti"/>
    <property type="match status" value="1"/>
</dbReference>
<dbReference type="Pfam" id="PF19402">
    <property type="entry name" value="RamS"/>
    <property type="match status" value="1"/>
</dbReference>
<protein>
    <recommendedName>
        <fullName>Lanthionine-containing peptide SapB</fullName>
    </recommendedName>
    <alternativeName>
        <fullName>Morphogen SapB</fullName>
    </alternativeName>
    <alternativeName>
        <fullName>Rapid aerial mycelium protein S</fullName>
    </alternativeName>
    <alternativeName>
        <fullName>Spore-associated protein B</fullName>
    </alternativeName>
</protein>
<keyword id="KW-0732">Signal</keyword>
<keyword id="KW-0883">Thioether bond</keyword>